<dbReference type="EMBL" id="CP000114">
    <property type="protein sequence ID" value="ABA44789.1"/>
    <property type="molecule type" value="Genomic_DNA"/>
</dbReference>
<dbReference type="RefSeq" id="WP_000221690.1">
    <property type="nucleotide sequence ID" value="NC_007432.1"/>
</dbReference>
<dbReference type="SMR" id="Q3JZU1"/>
<dbReference type="GeneID" id="66886440"/>
<dbReference type="KEGG" id="sak:SAK_1609"/>
<dbReference type="HOGENOM" id="CLU_045647_5_3_9"/>
<dbReference type="GO" id="GO:0005737">
    <property type="term" value="C:cytoplasm"/>
    <property type="evidence" value="ECO:0007669"/>
    <property type="project" value="UniProtKB-SubCell"/>
</dbReference>
<dbReference type="GO" id="GO:0051301">
    <property type="term" value="P:cell division"/>
    <property type="evidence" value="ECO:0007669"/>
    <property type="project" value="UniProtKB-KW"/>
</dbReference>
<dbReference type="GO" id="GO:0051304">
    <property type="term" value="P:chromosome separation"/>
    <property type="evidence" value="ECO:0007669"/>
    <property type="project" value="InterPro"/>
</dbReference>
<dbReference type="GO" id="GO:0006260">
    <property type="term" value="P:DNA replication"/>
    <property type="evidence" value="ECO:0007669"/>
    <property type="project" value="UniProtKB-UniRule"/>
</dbReference>
<dbReference type="Gene3D" id="1.10.10.10">
    <property type="entry name" value="Winged helix-like DNA-binding domain superfamily/Winged helix DNA-binding domain"/>
    <property type="match status" value="2"/>
</dbReference>
<dbReference type="HAMAP" id="MF_01804">
    <property type="entry name" value="ScpB"/>
    <property type="match status" value="1"/>
</dbReference>
<dbReference type="InterPro" id="IPR005234">
    <property type="entry name" value="ScpB_csome_segregation"/>
</dbReference>
<dbReference type="InterPro" id="IPR036388">
    <property type="entry name" value="WH-like_DNA-bd_sf"/>
</dbReference>
<dbReference type="InterPro" id="IPR036390">
    <property type="entry name" value="WH_DNA-bd_sf"/>
</dbReference>
<dbReference type="NCBIfam" id="TIGR00281">
    <property type="entry name" value="SMC-Scp complex subunit ScpB"/>
    <property type="match status" value="1"/>
</dbReference>
<dbReference type="PANTHER" id="PTHR34298">
    <property type="entry name" value="SEGREGATION AND CONDENSATION PROTEIN B"/>
    <property type="match status" value="1"/>
</dbReference>
<dbReference type="PANTHER" id="PTHR34298:SF2">
    <property type="entry name" value="SEGREGATION AND CONDENSATION PROTEIN B"/>
    <property type="match status" value="1"/>
</dbReference>
<dbReference type="Pfam" id="PF04079">
    <property type="entry name" value="SMC_ScpB"/>
    <property type="match status" value="1"/>
</dbReference>
<dbReference type="PIRSF" id="PIRSF019345">
    <property type="entry name" value="ScpB"/>
    <property type="match status" value="1"/>
</dbReference>
<dbReference type="SUPFAM" id="SSF46785">
    <property type="entry name" value="Winged helix' DNA-binding domain"/>
    <property type="match status" value="2"/>
</dbReference>
<gene>
    <name evidence="1" type="primary">scpB</name>
    <name type="ordered locus">SAK_1609</name>
</gene>
<protein>
    <recommendedName>
        <fullName evidence="1">Segregation and condensation protein B</fullName>
    </recommendedName>
</protein>
<comment type="function">
    <text evidence="1">Participates in chromosomal partition during cell division. May act via the formation of a condensin-like complex containing Smc and ScpA that pull DNA away from mid-cell into both cell halves.</text>
</comment>
<comment type="subunit">
    <text evidence="1">Homodimer. Homodimerization may be required to stabilize the binding of ScpA to the Smc head domains. Component of a cohesin-like complex composed of ScpA, ScpB and the Smc homodimer, in which ScpA and ScpB bind to the head domain of Smc. The presence of the three proteins is required for the association of the complex with DNA.</text>
</comment>
<comment type="subcellular location">
    <subcellularLocation>
        <location evidence="1">Cytoplasm</location>
    </subcellularLocation>
    <text evidence="1">Associated with two foci at the outer edges of the nucleoid region in young cells, and at four foci within both cell halves in older cells.</text>
</comment>
<comment type="similarity">
    <text evidence="1">Belongs to the ScpB family.</text>
</comment>
<evidence type="ECO:0000255" key="1">
    <source>
        <dbReference type="HAMAP-Rule" id="MF_01804"/>
    </source>
</evidence>
<reference key="1">
    <citation type="journal article" date="2005" name="Proc. Natl. Acad. Sci. U.S.A.">
        <title>Genome analysis of multiple pathogenic isolates of Streptococcus agalactiae: implications for the microbial 'pan-genome'.</title>
        <authorList>
            <person name="Tettelin H."/>
            <person name="Masignani V."/>
            <person name="Cieslewicz M.J."/>
            <person name="Donati C."/>
            <person name="Medini D."/>
            <person name="Ward N.L."/>
            <person name="Angiuoli S.V."/>
            <person name="Crabtree J."/>
            <person name="Jones A.L."/>
            <person name="Durkin A.S."/>
            <person name="DeBoy R.T."/>
            <person name="Davidsen T.M."/>
            <person name="Mora M."/>
            <person name="Scarselli M."/>
            <person name="Margarit y Ros I."/>
            <person name="Peterson J.D."/>
            <person name="Hauser C.R."/>
            <person name="Sundaram J.P."/>
            <person name="Nelson W.C."/>
            <person name="Madupu R."/>
            <person name="Brinkac L.M."/>
            <person name="Dodson R.J."/>
            <person name="Rosovitz M.J."/>
            <person name="Sullivan S.A."/>
            <person name="Daugherty S.C."/>
            <person name="Haft D.H."/>
            <person name="Selengut J."/>
            <person name="Gwinn M.L."/>
            <person name="Zhou L."/>
            <person name="Zafar N."/>
            <person name="Khouri H."/>
            <person name="Radune D."/>
            <person name="Dimitrov G."/>
            <person name="Watkins K."/>
            <person name="O'Connor K.J."/>
            <person name="Smith S."/>
            <person name="Utterback T.R."/>
            <person name="White O."/>
            <person name="Rubens C.E."/>
            <person name="Grandi G."/>
            <person name="Madoff L.C."/>
            <person name="Kasper D.L."/>
            <person name="Telford J.L."/>
            <person name="Wessels M.R."/>
            <person name="Rappuoli R."/>
            <person name="Fraser C.M."/>
        </authorList>
    </citation>
    <scope>NUCLEOTIDE SEQUENCE [LARGE SCALE GENOMIC DNA]</scope>
    <source>
        <strain>ATCC 27591 / A909 / CDC SS700</strain>
    </source>
</reference>
<sequence length="194" mass="21713">MTYLGSIEALLFVAGEDGLSLRQMAELLSLTPSALIQQLEKLAKRYEEDDDSSLLLLETAQTYKLVTKDSYMTLLRDYAKAPINQSLSRASLEVLSIIAYKQPITRIEIDDIRGVNSSGAITRLIAFGLIKEAGKKEVLGRPNLYETTNYFLDYMGINQLDDLIDASSIELVDEEVSLFSMDSINTEDKENNEN</sequence>
<proteinExistence type="inferred from homology"/>
<feature type="chain" id="PRO_0000273308" description="Segregation and condensation protein B">
    <location>
        <begin position="1"/>
        <end position="194"/>
    </location>
</feature>
<accession>Q3JZU1</accession>
<name>SCPB_STRA1</name>
<organism>
    <name type="scientific">Streptococcus agalactiae serotype Ia (strain ATCC 27591 / A909 / CDC SS700)</name>
    <dbReference type="NCBI Taxonomy" id="205921"/>
    <lineage>
        <taxon>Bacteria</taxon>
        <taxon>Bacillati</taxon>
        <taxon>Bacillota</taxon>
        <taxon>Bacilli</taxon>
        <taxon>Lactobacillales</taxon>
        <taxon>Streptococcaceae</taxon>
        <taxon>Streptococcus</taxon>
    </lineage>
</organism>
<keyword id="KW-0131">Cell cycle</keyword>
<keyword id="KW-0132">Cell division</keyword>
<keyword id="KW-0159">Chromosome partition</keyword>
<keyword id="KW-0963">Cytoplasm</keyword>